<gene>
    <name evidence="1" type="primary">tyrS</name>
    <name type="ordered locus">Spro_2219</name>
</gene>
<feature type="chain" id="PRO_1000088623" description="Tyrosine--tRNA ligase">
    <location>
        <begin position="1"/>
        <end position="424"/>
    </location>
</feature>
<feature type="domain" description="S4 RNA-binding" evidence="1">
    <location>
        <begin position="357"/>
        <end position="414"/>
    </location>
</feature>
<feature type="short sequence motif" description="'HIGH' region">
    <location>
        <begin position="42"/>
        <end position="51"/>
    </location>
</feature>
<feature type="short sequence motif" description="'KMSKS' region">
    <location>
        <begin position="235"/>
        <end position="239"/>
    </location>
</feature>
<feature type="binding site" evidence="1">
    <location>
        <position position="37"/>
    </location>
    <ligand>
        <name>L-tyrosine</name>
        <dbReference type="ChEBI" id="CHEBI:58315"/>
    </ligand>
</feature>
<feature type="binding site" evidence="1">
    <location>
        <position position="175"/>
    </location>
    <ligand>
        <name>L-tyrosine</name>
        <dbReference type="ChEBI" id="CHEBI:58315"/>
    </ligand>
</feature>
<feature type="binding site" evidence="1">
    <location>
        <position position="179"/>
    </location>
    <ligand>
        <name>L-tyrosine</name>
        <dbReference type="ChEBI" id="CHEBI:58315"/>
    </ligand>
</feature>
<feature type="binding site" evidence="1">
    <location>
        <position position="238"/>
    </location>
    <ligand>
        <name>ATP</name>
        <dbReference type="ChEBI" id="CHEBI:30616"/>
    </ligand>
</feature>
<dbReference type="EC" id="6.1.1.1" evidence="1"/>
<dbReference type="EMBL" id="CP000826">
    <property type="protein sequence ID" value="ABV41320.1"/>
    <property type="molecule type" value="Genomic_DNA"/>
</dbReference>
<dbReference type="SMR" id="A8GDY0"/>
<dbReference type="STRING" id="399741.Spro_2219"/>
<dbReference type="KEGG" id="spe:Spro_2219"/>
<dbReference type="eggNOG" id="COG0162">
    <property type="taxonomic scope" value="Bacteria"/>
</dbReference>
<dbReference type="HOGENOM" id="CLU_024003_0_3_6"/>
<dbReference type="OrthoDB" id="9804243at2"/>
<dbReference type="GO" id="GO:0005829">
    <property type="term" value="C:cytosol"/>
    <property type="evidence" value="ECO:0007669"/>
    <property type="project" value="TreeGrafter"/>
</dbReference>
<dbReference type="GO" id="GO:0005524">
    <property type="term" value="F:ATP binding"/>
    <property type="evidence" value="ECO:0007669"/>
    <property type="project" value="UniProtKB-UniRule"/>
</dbReference>
<dbReference type="GO" id="GO:0003723">
    <property type="term" value="F:RNA binding"/>
    <property type="evidence" value="ECO:0007669"/>
    <property type="project" value="UniProtKB-KW"/>
</dbReference>
<dbReference type="GO" id="GO:0004831">
    <property type="term" value="F:tyrosine-tRNA ligase activity"/>
    <property type="evidence" value="ECO:0007669"/>
    <property type="project" value="UniProtKB-UniRule"/>
</dbReference>
<dbReference type="GO" id="GO:0006437">
    <property type="term" value="P:tyrosyl-tRNA aminoacylation"/>
    <property type="evidence" value="ECO:0007669"/>
    <property type="project" value="UniProtKB-UniRule"/>
</dbReference>
<dbReference type="CDD" id="cd00165">
    <property type="entry name" value="S4"/>
    <property type="match status" value="1"/>
</dbReference>
<dbReference type="CDD" id="cd00805">
    <property type="entry name" value="TyrRS_core"/>
    <property type="match status" value="1"/>
</dbReference>
<dbReference type="FunFam" id="1.10.240.10:FF:000001">
    <property type="entry name" value="Tyrosine--tRNA ligase"/>
    <property type="match status" value="1"/>
</dbReference>
<dbReference type="FunFam" id="3.40.50.620:FF:000008">
    <property type="entry name" value="Tyrosine--tRNA ligase"/>
    <property type="match status" value="1"/>
</dbReference>
<dbReference type="Gene3D" id="3.40.50.620">
    <property type="entry name" value="HUPs"/>
    <property type="match status" value="1"/>
</dbReference>
<dbReference type="Gene3D" id="3.10.290.10">
    <property type="entry name" value="RNA-binding S4 domain"/>
    <property type="match status" value="1"/>
</dbReference>
<dbReference type="Gene3D" id="1.10.240.10">
    <property type="entry name" value="Tyrosyl-Transfer RNA Synthetase"/>
    <property type="match status" value="1"/>
</dbReference>
<dbReference type="HAMAP" id="MF_02006">
    <property type="entry name" value="Tyr_tRNA_synth_type1"/>
    <property type="match status" value="1"/>
</dbReference>
<dbReference type="InterPro" id="IPR001412">
    <property type="entry name" value="aa-tRNA-synth_I_CS"/>
</dbReference>
<dbReference type="InterPro" id="IPR002305">
    <property type="entry name" value="aa-tRNA-synth_Ic"/>
</dbReference>
<dbReference type="InterPro" id="IPR014729">
    <property type="entry name" value="Rossmann-like_a/b/a_fold"/>
</dbReference>
<dbReference type="InterPro" id="IPR002942">
    <property type="entry name" value="S4_RNA-bd"/>
</dbReference>
<dbReference type="InterPro" id="IPR036986">
    <property type="entry name" value="S4_RNA-bd_sf"/>
</dbReference>
<dbReference type="InterPro" id="IPR054608">
    <property type="entry name" value="SYY-like_C"/>
</dbReference>
<dbReference type="InterPro" id="IPR002307">
    <property type="entry name" value="Tyr-tRNA-ligase"/>
</dbReference>
<dbReference type="InterPro" id="IPR024088">
    <property type="entry name" value="Tyr-tRNA-ligase_bac-type"/>
</dbReference>
<dbReference type="InterPro" id="IPR024107">
    <property type="entry name" value="Tyr-tRNA-ligase_bac_1"/>
</dbReference>
<dbReference type="NCBIfam" id="TIGR00234">
    <property type="entry name" value="tyrS"/>
    <property type="match status" value="1"/>
</dbReference>
<dbReference type="PANTHER" id="PTHR11766:SF0">
    <property type="entry name" value="TYROSINE--TRNA LIGASE, MITOCHONDRIAL"/>
    <property type="match status" value="1"/>
</dbReference>
<dbReference type="PANTHER" id="PTHR11766">
    <property type="entry name" value="TYROSYL-TRNA SYNTHETASE"/>
    <property type="match status" value="1"/>
</dbReference>
<dbReference type="Pfam" id="PF22421">
    <property type="entry name" value="SYY_C-terminal"/>
    <property type="match status" value="1"/>
</dbReference>
<dbReference type="Pfam" id="PF00579">
    <property type="entry name" value="tRNA-synt_1b"/>
    <property type="match status" value="1"/>
</dbReference>
<dbReference type="PRINTS" id="PR01040">
    <property type="entry name" value="TRNASYNTHTYR"/>
</dbReference>
<dbReference type="SMART" id="SM00363">
    <property type="entry name" value="S4"/>
    <property type="match status" value="1"/>
</dbReference>
<dbReference type="SUPFAM" id="SSF55174">
    <property type="entry name" value="Alpha-L RNA-binding motif"/>
    <property type="match status" value="1"/>
</dbReference>
<dbReference type="SUPFAM" id="SSF52374">
    <property type="entry name" value="Nucleotidylyl transferase"/>
    <property type="match status" value="1"/>
</dbReference>
<dbReference type="PROSITE" id="PS00178">
    <property type="entry name" value="AA_TRNA_LIGASE_I"/>
    <property type="match status" value="1"/>
</dbReference>
<dbReference type="PROSITE" id="PS50889">
    <property type="entry name" value="S4"/>
    <property type="match status" value="1"/>
</dbReference>
<keyword id="KW-0030">Aminoacyl-tRNA synthetase</keyword>
<keyword id="KW-0067">ATP-binding</keyword>
<keyword id="KW-0963">Cytoplasm</keyword>
<keyword id="KW-0436">Ligase</keyword>
<keyword id="KW-0547">Nucleotide-binding</keyword>
<keyword id="KW-0648">Protein biosynthesis</keyword>
<keyword id="KW-0694">RNA-binding</keyword>
<proteinExistence type="inferred from homology"/>
<reference key="1">
    <citation type="submission" date="2007-09" db="EMBL/GenBank/DDBJ databases">
        <title>Complete sequence of chromosome of Serratia proteamaculans 568.</title>
        <authorList>
            <consortium name="US DOE Joint Genome Institute"/>
            <person name="Copeland A."/>
            <person name="Lucas S."/>
            <person name="Lapidus A."/>
            <person name="Barry K."/>
            <person name="Glavina del Rio T."/>
            <person name="Dalin E."/>
            <person name="Tice H."/>
            <person name="Pitluck S."/>
            <person name="Chain P."/>
            <person name="Malfatti S."/>
            <person name="Shin M."/>
            <person name="Vergez L."/>
            <person name="Schmutz J."/>
            <person name="Larimer F."/>
            <person name="Land M."/>
            <person name="Hauser L."/>
            <person name="Kyrpides N."/>
            <person name="Kim E."/>
            <person name="Taghavi S."/>
            <person name="Newman L."/>
            <person name="Vangronsveld J."/>
            <person name="van der Lelie D."/>
            <person name="Richardson P."/>
        </authorList>
    </citation>
    <scope>NUCLEOTIDE SEQUENCE [LARGE SCALE GENOMIC DNA]</scope>
    <source>
        <strain>568</strain>
    </source>
</reference>
<organism>
    <name type="scientific">Serratia proteamaculans (strain 568)</name>
    <dbReference type="NCBI Taxonomy" id="399741"/>
    <lineage>
        <taxon>Bacteria</taxon>
        <taxon>Pseudomonadati</taxon>
        <taxon>Pseudomonadota</taxon>
        <taxon>Gammaproteobacteria</taxon>
        <taxon>Enterobacterales</taxon>
        <taxon>Yersiniaceae</taxon>
        <taxon>Serratia</taxon>
    </lineage>
</organism>
<accession>A8GDY0</accession>
<comment type="function">
    <text evidence="1">Catalyzes the attachment of tyrosine to tRNA(Tyr) in a two-step reaction: tyrosine is first activated by ATP to form Tyr-AMP and then transferred to the acceptor end of tRNA(Tyr).</text>
</comment>
<comment type="catalytic activity">
    <reaction evidence="1">
        <text>tRNA(Tyr) + L-tyrosine + ATP = L-tyrosyl-tRNA(Tyr) + AMP + diphosphate + H(+)</text>
        <dbReference type="Rhea" id="RHEA:10220"/>
        <dbReference type="Rhea" id="RHEA-COMP:9706"/>
        <dbReference type="Rhea" id="RHEA-COMP:9707"/>
        <dbReference type="ChEBI" id="CHEBI:15378"/>
        <dbReference type="ChEBI" id="CHEBI:30616"/>
        <dbReference type="ChEBI" id="CHEBI:33019"/>
        <dbReference type="ChEBI" id="CHEBI:58315"/>
        <dbReference type="ChEBI" id="CHEBI:78442"/>
        <dbReference type="ChEBI" id="CHEBI:78536"/>
        <dbReference type="ChEBI" id="CHEBI:456215"/>
        <dbReference type="EC" id="6.1.1.1"/>
    </reaction>
</comment>
<comment type="subunit">
    <text evidence="1">Homodimer.</text>
</comment>
<comment type="subcellular location">
    <subcellularLocation>
        <location evidence="1">Cytoplasm</location>
    </subcellularLocation>
</comment>
<comment type="similarity">
    <text evidence="1">Belongs to the class-I aminoacyl-tRNA synthetase family. TyrS type 1 subfamily.</text>
</comment>
<protein>
    <recommendedName>
        <fullName evidence="1">Tyrosine--tRNA ligase</fullName>
        <ecNumber evidence="1">6.1.1.1</ecNumber>
    </recommendedName>
    <alternativeName>
        <fullName evidence="1">Tyrosyl-tRNA synthetase</fullName>
        <shortName evidence="1">TyrRS</shortName>
    </alternativeName>
</protein>
<evidence type="ECO:0000255" key="1">
    <source>
        <dbReference type="HAMAP-Rule" id="MF_02006"/>
    </source>
</evidence>
<sequence length="424" mass="47068">MASSNLIKQLQERGLVAQVTDEEALAERLAQGPIALYCGFDPTADSLHLGHLVPLLCLKRFQLAGHKPVALVGGATGLIGDPSFKAAERKLNTTETVNEWVDKIRKQVSPFLDFDCGSNSAIAANNYDWFGGMNVLTFLRDIGKHFSVNQMINKEAVKQRLNRDDSGISFTEFSYNLLQGFDFSELYNRHQVELQIGGSDQWGNITSGIDLTRRMHQQQVFGLTVPLITKADGTKFGKTEGGAVWLAPEKTSPYKFYQFWINTADADVYRFLKFFTFMDLAEINALEEEDKNSGKAPRAQYVLAEEVTGMVHGAEGLAAAKRITQSLFSGALHEMTEADFAQLAQDGMPTIKLDGDADLQQALVNAELVPSRGQARTMIGSNAVTINGEKQSNAEYNFSDADRLFGRYTLLRRGKKHYCLVDWQ</sequence>
<name>SYY_SERP5</name>